<protein>
    <recommendedName>
        <fullName evidence="7">ABC transporter G family member 36</fullName>
        <shortName evidence="7">OsABCG36</shortName>
    </recommendedName>
    <alternativeName>
        <fullName evidence="6">Pleiotropic drug resistance protein 9</fullName>
        <shortName evidence="6">OsPDR9</shortName>
    </alternativeName>
</protein>
<gene>
    <name evidence="7" type="primary">ABCG36</name>
    <name evidence="6" type="synonym">PDR9</name>
    <name evidence="8" type="ORF">OsI_002763</name>
</gene>
<accession>A2WSH0</accession>
<accession>Q5ZE26</accession>
<accession>Q5ZE27</accession>
<accession>Q6WSC4</accession>
<accession>Q8GU90</accession>
<comment type="function">
    <text evidence="1">May be a general defense protein.</text>
</comment>
<comment type="subcellular location">
    <subcellularLocation>
        <location evidence="2">Membrane</location>
        <topology evidence="2">Multi-pass membrane protein</topology>
    </subcellularLocation>
</comment>
<comment type="induction">
    <text evidence="5">In roots. By heavy metals such as zinc (Zn), nickel (Ni) and cobalt (Co). Also induced by some phytohormones including auxin (NAA), cytokinin (BA), jasmonic acid (JA) and abscisic acid (ABA). Triggered by biotic (submergence) and abiotic stresses (ethanol, PEG), as well as by oxidative stresses mediated by antioxidants (DTT and ascorbic acid) and oxidants (hydrogen peroxide).</text>
</comment>
<comment type="similarity">
    <text evidence="7">Belongs to the ABC transporter superfamily. ABCG family. PDR (TC 3.A.1.205) subfamily.</text>
</comment>
<organism>
    <name type="scientific">Oryza sativa subsp. indica</name>
    <name type="common">Rice</name>
    <dbReference type="NCBI Taxonomy" id="39946"/>
    <lineage>
        <taxon>Eukaryota</taxon>
        <taxon>Viridiplantae</taxon>
        <taxon>Streptophyta</taxon>
        <taxon>Embryophyta</taxon>
        <taxon>Tracheophyta</taxon>
        <taxon>Spermatophyta</taxon>
        <taxon>Magnoliopsida</taxon>
        <taxon>Liliopsida</taxon>
        <taxon>Poales</taxon>
        <taxon>Poaceae</taxon>
        <taxon>BOP clade</taxon>
        <taxon>Oryzoideae</taxon>
        <taxon>Oryzeae</taxon>
        <taxon>Oryzinae</taxon>
        <taxon>Oryza</taxon>
        <taxon>Oryza sativa</taxon>
    </lineage>
</organism>
<evidence type="ECO:0000250" key="1"/>
<evidence type="ECO:0000255" key="2"/>
<evidence type="ECO:0000255" key="3">
    <source>
        <dbReference type="PROSITE-ProRule" id="PRU00434"/>
    </source>
</evidence>
<evidence type="ECO:0000256" key="4">
    <source>
        <dbReference type="SAM" id="MobiDB-lite"/>
    </source>
</evidence>
<evidence type="ECO:0000269" key="5">
    <source>
    </source>
</evidence>
<evidence type="ECO:0000303" key="6">
    <source>
    </source>
</evidence>
<evidence type="ECO:0000305" key="7"/>
<evidence type="ECO:0000312" key="8">
    <source>
        <dbReference type="EMBL" id="EAY74916.1"/>
    </source>
</evidence>
<dbReference type="EMBL" id="AY271618">
    <property type="protein sequence ID" value="AAQ02685.1"/>
    <property type="molecule type" value="mRNA"/>
</dbReference>
<dbReference type="EMBL" id="CM000126">
    <property type="protein sequence ID" value="EAY74916.1"/>
    <property type="molecule type" value="Genomic_DNA"/>
</dbReference>
<dbReference type="SMR" id="A2WSH0"/>
<dbReference type="STRING" id="39946.A2WSH0"/>
<dbReference type="EnsemblPlants" id="BGIOSGA001233-TA">
    <property type="protein sequence ID" value="BGIOSGA001233-PA"/>
    <property type="gene ID" value="BGIOSGA001233"/>
</dbReference>
<dbReference type="Gramene" id="BGIOSGA001233-TA">
    <property type="protein sequence ID" value="BGIOSGA001233-PA"/>
    <property type="gene ID" value="BGIOSGA001233"/>
</dbReference>
<dbReference type="HOGENOM" id="CLU_000604_35_6_1"/>
<dbReference type="OMA" id="QYQIMWG"/>
<dbReference type="Proteomes" id="UP000007015">
    <property type="component" value="Chromosome 1"/>
</dbReference>
<dbReference type="GO" id="GO:0016020">
    <property type="term" value="C:membrane"/>
    <property type="evidence" value="ECO:0007669"/>
    <property type="project" value="UniProtKB-SubCell"/>
</dbReference>
<dbReference type="GO" id="GO:0140359">
    <property type="term" value="F:ABC-type transporter activity"/>
    <property type="evidence" value="ECO:0007669"/>
    <property type="project" value="InterPro"/>
</dbReference>
<dbReference type="GO" id="GO:0005524">
    <property type="term" value="F:ATP binding"/>
    <property type="evidence" value="ECO:0007669"/>
    <property type="project" value="UniProtKB-KW"/>
</dbReference>
<dbReference type="GO" id="GO:0016887">
    <property type="term" value="F:ATP hydrolysis activity"/>
    <property type="evidence" value="ECO:0007669"/>
    <property type="project" value="InterPro"/>
</dbReference>
<dbReference type="CDD" id="cd03232">
    <property type="entry name" value="ABCG_PDR_domain2"/>
    <property type="match status" value="1"/>
</dbReference>
<dbReference type="FunFam" id="3.40.50.300:FF:000179">
    <property type="entry name" value="ABC transporter G family member 34"/>
    <property type="match status" value="1"/>
</dbReference>
<dbReference type="FunFam" id="3.40.50.300:FF:000059">
    <property type="entry name" value="ABC transporter G family member 40"/>
    <property type="match status" value="1"/>
</dbReference>
<dbReference type="Gene3D" id="3.40.50.300">
    <property type="entry name" value="P-loop containing nucleotide triphosphate hydrolases"/>
    <property type="match status" value="2"/>
</dbReference>
<dbReference type="InterPro" id="IPR003593">
    <property type="entry name" value="AAA+_ATPase"/>
</dbReference>
<dbReference type="InterPro" id="IPR013525">
    <property type="entry name" value="ABC2_TM"/>
</dbReference>
<dbReference type="InterPro" id="IPR029481">
    <property type="entry name" value="ABC_trans_N"/>
</dbReference>
<dbReference type="InterPro" id="IPR003439">
    <property type="entry name" value="ABC_transporter-like_ATP-bd"/>
</dbReference>
<dbReference type="InterPro" id="IPR043926">
    <property type="entry name" value="ABCG_dom"/>
</dbReference>
<dbReference type="InterPro" id="IPR034003">
    <property type="entry name" value="ABCG_PDR_2"/>
</dbReference>
<dbReference type="InterPro" id="IPR027417">
    <property type="entry name" value="P-loop_NTPase"/>
</dbReference>
<dbReference type="InterPro" id="IPR013581">
    <property type="entry name" value="PDR_assoc"/>
</dbReference>
<dbReference type="PANTHER" id="PTHR48040:SF35">
    <property type="entry name" value="ABC TRANSPORTER G FAMILY MEMBER 39-LIKE"/>
    <property type="match status" value="1"/>
</dbReference>
<dbReference type="PANTHER" id="PTHR48040">
    <property type="entry name" value="PLEIOTROPIC DRUG RESISTANCE PROTEIN 1-LIKE ISOFORM X1"/>
    <property type="match status" value="1"/>
</dbReference>
<dbReference type="Pfam" id="PF01061">
    <property type="entry name" value="ABC2_membrane"/>
    <property type="match status" value="2"/>
</dbReference>
<dbReference type="Pfam" id="PF19055">
    <property type="entry name" value="ABC2_membrane_7"/>
    <property type="match status" value="1"/>
</dbReference>
<dbReference type="Pfam" id="PF00005">
    <property type="entry name" value="ABC_tran"/>
    <property type="match status" value="2"/>
</dbReference>
<dbReference type="Pfam" id="PF14510">
    <property type="entry name" value="ABC_trans_N"/>
    <property type="match status" value="1"/>
</dbReference>
<dbReference type="Pfam" id="PF08370">
    <property type="entry name" value="PDR_assoc"/>
    <property type="match status" value="1"/>
</dbReference>
<dbReference type="SMART" id="SM00382">
    <property type="entry name" value="AAA"/>
    <property type="match status" value="2"/>
</dbReference>
<dbReference type="SUPFAM" id="SSF52540">
    <property type="entry name" value="P-loop containing nucleoside triphosphate hydrolases"/>
    <property type="match status" value="2"/>
</dbReference>
<dbReference type="PROSITE" id="PS50893">
    <property type="entry name" value="ABC_TRANSPORTER_2"/>
    <property type="match status" value="2"/>
</dbReference>
<feature type="chain" id="PRO_0000291458" description="ABC transporter G family member 36">
    <location>
        <begin position="1"/>
        <end position="1457"/>
    </location>
</feature>
<feature type="transmembrane region" description="Helical" evidence="2">
    <location>
        <begin position="533"/>
        <end position="553"/>
    </location>
</feature>
<feature type="transmembrane region" description="Helical" evidence="2">
    <location>
        <begin position="565"/>
        <end position="585"/>
    </location>
</feature>
<feature type="transmembrane region" description="Helical" evidence="2">
    <location>
        <begin position="621"/>
        <end position="641"/>
    </location>
</feature>
<feature type="transmembrane region" description="Helical" evidence="2">
    <location>
        <begin position="653"/>
        <end position="673"/>
    </location>
</feature>
<feature type="transmembrane region" description="Helical" evidence="2">
    <location>
        <begin position="677"/>
        <end position="697"/>
    </location>
</feature>
<feature type="transmembrane region" description="Helical" evidence="2">
    <location>
        <begin position="706"/>
        <end position="726"/>
    </location>
</feature>
<feature type="transmembrane region" description="Helical" evidence="2">
    <location>
        <begin position="765"/>
        <end position="785"/>
    </location>
</feature>
<feature type="transmembrane region" description="Helical" evidence="2">
    <location>
        <begin position="1209"/>
        <end position="1229"/>
    </location>
</feature>
<feature type="transmembrane region" description="Helical" evidence="2">
    <location>
        <begin position="1244"/>
        <end position="1264"/>
    </location>
</feature>
<feature type="transmembrane region" description="Helical" evidence="2">
    <location>
        <begin position="1292"/>
        <end position="1312"/>
    </location>
</feature>
<feature type="transmembrane region" description="Helical" evidence="2">
    <location>
        <begin position="1319"/>
        <end position="1339"/>
    </location>
</feature>
<feature type="transmembrane region" description="Helical" evidence="2">
    <location>
        <begin position="1349"/>
        <end position="1369"/>
    </location>
</feature>
<feature type="transmembrane region" description="Helical" evidence="2">
    <location>
        <begin position="1380"/>
        <end position="1400"/>
    </location>
</feature>
<feature type="transmembrane region" description="Helical" evidence="2">
    <location>
        <begin position="1429"/>
        <end position="1449"/>
    </location>
</feature>
<feature type="domain" description="ABC transporter 1" evidence="3">
    <location>
        <begin position="164"/>
        <end position="437"/>
    </location>
</feature>
<feature type="domain" description="ABC transmembrane type-2 1">
    <location>
        <begin position="515"/>
        <end position="728"/>
    </location>
</feature>
<feature type="domain" description="ABC transporter 2" evidence="3">
    <location>
        <begin position="860"/>
        <end position="1112"/>
    </location>
</feature>
<feature type="domain" description="ABC transmembrane type-2 2">
    <location>
        <begin position="1185"/>
        <end position="1399"/>
    </location>
</feature>
<feature type="region of interest" description="Disordered" evidence="4">
    <location>
        <begin position="14"/>
        <end position="43"/>
    </location>
</feature>
<feature type="region of interest" description="Disordered" evidence="4">
    <location>
        <begin position="821"/>
        <end position="841"/>
    </location>
</feature>
<feature type="compositionally biased region" description="Basic and acidic residues" evidence="4">
    <location>
        <begin position="28"/>
        <end position="39"/>
    </location>
</feature>
<feature type="binding site" evidence="3">
    <location>
        <begin position="197"/>
        <end position="204"/>
    </location>
    <ligand>
        <name>ATP</name>
        <dbReference type="ChEBI" id="CHEBI:30616"/>
        <label>1</label>
    </ligand>
</feature>
<feature type="binding site" evidence="3">
    <location>
        <begin position="905"/>
        <end position="912"/>
    </location>
    <ligand>
        <name>ATP</name>
        <dbReference type="ChEBI" id="CHEBI:30616"/>
        <label>2</label>
    </ligand>
</feature>
<feature type="sequence conflict" description="In Ref. 1; AAQ02685." evidence="7" ref="1">
    <original>L</original>
    <variation>M</variation>
    <location>
        <position position="803"/>
    </location>
</feature>
<feature type="sequence conflict" description="In Ref. 1; AAQ02685." evidence="7" ref="1">
    <original>R</original>
    <variation>S</variation>
    <location>
        <position position="1155"/>
    </location>
</feature>
<feature type="sequence conflict" description="In Ref. 1; AAQ02685." evidence="7" ref="1">
    <original>R</original>
    <variation>K</variation>
    <location>
        <position position="1208"/>
    </location>
</feature>
<sequence length="1457" mass="162925">MDAAGEIQKVASMRLGGSMRGDSGSMWRRGDDVFSRSSREEDDEEALRWAALEKLPTYDRVRRAILPLGGDDGAGDGGGKGVVDVHGLGPRERRALLERLVRVADEDNEKFLLKLKDRVDRVGIDMPTIEVRFEHLEAEAEVRVGNSGLPTVLNSITNTLEEAGNALGILPNRKQTMPVLHDVSGIIKPRRMTLLLGPPGSGKTTLLLALAGRLGKDLKASGKVTYNGHGMEEFVPERTAAYISQHDLHIGEMTVRETLAFSARCQGVGSRFDMLTELSRREKAANIKPDADIDAFMKAAAMGGQEANVNTDYILKILGLEICADTMVGDEMLRGISGGQRKRVTTGEMLVGPARALFMDEISTGLDSSTTFQIVNSLRQTVHILGGTAVISLLQPAPETYNLFDDIILLSDGQIVYQGPREDVLEFFESTGFKCPDRKGVADFLQEVTSKKDQRQYWARHDKPYRFVTVKEFVSAFQSFHTGRAIANELAVPFDKSKSHPAALATTRYGAPGKELLKANIDREILLMKRNSFVYMFRTFQLMVVSLIAMTLFFRTKMKRDSVTSGGIYMGALFFGVLMIMFNGFSELALTVFKLPVFFKQRDLLFYPAWSYTIPSWILKIPITFIEVGGYVFLTYYVIGFDSNVGSFFKQYLLMLAINQMAGSLFRFIGGAARNMIVANVFASFMLLIFMVLGGFILAREQVKKWWIWGYWISPMMYAQNAISVNELMGHSWNKIVNSSASNETLGVQVLKSRGVFPEARWYWIGFGAMIGFTILFNALFTLALTYLRPYGNSRQSVSEEELKEKRANLNGEIVGDVHLSSGSTRRPMGNGTENDSTIVDDDTEVTQRGMVLPFTPLSLSFDNVRYSVDMPQEMKAQGVADDRLELLKGVSGSFRPGVLTALMGVSGAGKTTLMDVLAGRKTGGYIEGSINISGYPKKQETFARVSGYCEQNDIHSPQVTVYESLLFSAWLRLPEDVDSNTRKMFIEEVMELVELKSLRDALVGLPGVNGLSTEQRKRLTIAVELVANPSIIFMDEPTSGLDARAAAIVMRTVRNTVNTGRTVVCTIHQPSIDIFEAFDELFLMKRGGEEIYAGPLGHHSSELIKYFESIPGVSKIKDGYNPATWMLEVTTIGQEQALGVDFSDIYKKSELYQRNKALIKDLSQPAPDSSDLYFPTQYSQSSLTQCMACLWKQNLSYWRNPPYNAVRFFFTTVIALLFGTIFWDLGGKVTKSQDLFNAMGSMYAAVLFIGVMNCTSVQPVVAVERTVFYRERAAGMYSAFPYAFGQVVIEIPYTLVQATVYGIIVYAMIGFEWTAAKFFWYLFFMVFTLLYFTFYGMMAVGLTPNYHIASIVSSAFYAIWNLFSGFVIPRPRVPIWWRWYCWACPVAWTLYGLVVSQFGDIETPMEDGTPVKVFVENYFGFKHSWLGWVATVVAAFAFLFASLFGFAIMKFNFQKR</sequence>
<name>AB36G_ORYSI</name>
<proteinExistence type="evidence at transcript level"/>
<keyword id="KW-0067">ATP-binding</keyword>
<keyword id="KW-0472">Membrane</keyword>
<keyword id="KW-0547">Nucleotide-binding</keyword>
<keyword id="KW-1185">Reference proteome</keyword>
<keyword id="KW-0677">Repeat</keyword>
<keyword id="KW-0812">Transmembrane</keyword>
<keyword id="KW-1133">Transmembrane helix</keyword>
<keyword id="KW-0813">Transport</keyword>
<reference key="1">
    <citation type="journal article" date="2003" name="FEBS Lett.">
        <title>Ospdr9, which encodes a PDR-type ABC transporter, is induced by heavy metals, hypoxic stress and redox perturbations in rice roots.</title>
        <authorList>
            <person name="Moons A."/>
        </authorList>
    </citation>
    <scope>NUCLEOTIDE SEQUENCE [MRNA]</scope>
    <scope>INDUCTION</scope>
    <source>
        <strain>cv. Pokkali</strain>
        <tissue>Root</tissue>
    </source>
</reference>
<reference key="2">
    <citation type="journal article" date="2005" name="PLoS Biol.">
        <title>The genomes of Oryza sativa: a history of duplications.</title>
        <authorList>
            <person name="Yu J."/>
            <person name="Wang J."/>
            <person name="Lin W."/>
            <person name="Li S."/>
            <person name="Li H."/>
            <person name="Zhou J."/>
            <person name="Ni P."/>
            <person name="Dong W."/>
            <person name="Hu S."/>
            <person name="Zeng C."/>
            <person name="Zhang J."/>
            <person name="Zhang Y."/>
            <person name="Li R."/>
            <person name="Xu Z."/>
            <person name="Li S."/>
            <person name="Li X."/>
            <person name="Zheng H."/>
            <person name="Cong L."/>
            <person name="Lin L."/>
            <person name="Yin J."/>
            <person name="Geng J."/>
            <person name="Li G."/>
            <person name="Shi J."/>
            <person name="Liu J."/>
            <person name="Lv H."/>
            <person name="Li J."/>
            <person name="Wang J."/>
            <person name="Deng Y."/>
            <person name="Ran L."/>
            <person name="Shi X."/>
            <person name="Wang X."/>
            <person name="Wu Q."/>
            <person name="Li C."/>
            <person name="Ren X."/>
            <person name="Wang J."/>
            <person name="Wang X."/>
            <person name="Li D."/>
            <person name="Liu D."/>
            <person name="Zhang X."/>
            <person name="Ji Z."/>
            <person name="Zhao W."/>
            <person name="Sun Y."/>
            <person name="Zhang Z."/>
            <person name="Bao J."/>
            <person name="Han Y."/>
            <person name="Dong L."/>
            <person name="Ji J."/>
            <person name="Chen P."/>
            <person name="Wu S."/>
            <person name="Liu J."/>
            <person name="Xiao Y."/>
            <person name="Bu D."/>
            <person name="Tan J."/>
            <person name="Yang L."/>
            <person name="Ye C."/>
            <person name="Zhang J."/>
            <person name="Xu J."/>
            <person name="Zhou Y."/>
            <person name="Yu Y."/>
            <person name="Zhang B."/>
            <person name="Zhuang S."/>
            <person name="Wei H."/>
            <person name="Liu B."/>
            <person name="Lei M."/>
            <person name="Yu H."/>
            <person name="Li Y."/>
            <person name="Xu H."/>
            <person name="Wei S."/>
            <person name="He X."/>
            <person name="Fang L."/>
            <person name="Zhang Z."/>
            <person name="Zhang Y."/>
            <person name="Huang X."/>
            <person name="Su Z."/>
            <person name="Tong W."/>
            <person name="Li J."/>
            <person name="Tong Z."/>
            <person name="Li S."/>
            <person name="Ye J."/>
            <person name="Wang L."/>
            <person name="Fang L."/>
            <person name="Lei T."/>
            <person name="Chen C.-S."/>
            <person name="Chen H.-C."/>
            <person name="Xu Z."/>
            <person name="Li H."/>
            <person name="Huang H."/>
            <person name="Zhang F."/>
            <person name="Xu H."/>
            <person name="Li N."/>
            <person name="Zhao C."/>
            <person name="Li S."/>
            <person name="Dong L."/>
            <person name="Huang Y."/>
            <person name="Li L."/>
            <person name="Xi Y."/>
            <person name="Qi Q."/>
            <person name="Li W."/>
            <person name="Zhang B."/>
            <person name="Hu W."/>
            <person name="Zhang Y."/>
            <person name="Tian X."/>
            <person name="Jiao Y."/>
            <person name="Liang X."/>
            <person name="Jin J."/>
            <person name="Gao L."/>
            <person name="Zheng W."/>
            <person name="Hao B."/>
            <person name="Liu S.-M."/>
            <person name="Wang W."/>
            <person name="Yuan L."/>
            <person name="Cao M."/>
            <person name="McDermott J."/>
            <person name="Samudrala R."/>
            <person name="Wang J."/>
            <person name="Wong G.K.-S."/>
            <person name="Yang H."/>
        </authorList>
    </citation>
    <scope>NUCLEOTIDE SEQUENCE [LARGE SCALE GENOMIC DNA]</scope>
    <source>
        <strain>cv. 93-11</strain>
    </source>
</reference>